<comment type="function">
    <text evidence="1">Binds together with bS18 to 16S ribosomal RNA.</text>
</comment>
<comment type="similarity">
    <text evidence="1">Belongs to the bacterial ribosomal protein bS6 family.</text>
</comment>
<keyword id="KW-1185">Reference proteome</keyword>
<keyword id="KW-0687">Ribonucleoprotein</keyword>
<keyword id="KW-0689">Ribosomal protein</keyword>
<keyword id="KW-0694">RNA-binding</keyword>
<keyword id="KW-0699">rRNA-binding</keyword>
<reference key="1">
    <citation type="journal article" date="2007" name="ISME J.">
        <title>Population level functional diversity in a microbial community revealed by comparative genomic and metagenomic analyses.</title>
        <authorList>
            <person name="Bhaya D."/>
            <person name="Grossman A.R."/>
            <person name="Steunou A.-S."/>
            <person name="Khuri N."/>
            <person name="Cohan F.M."/>
            <person name="Hamamura N."/>
            <person name="Melendrez M.C."/>
            <person name="Bateson M.M."/>
            <person name="Ward D.M."/>
            <person name="Heidelberg J.F."/>
        </authorList>
    </citation>
    <scope>NUCLEOTIDE SEQUENCE [LARGE SCALE GENOMIC DNA]</scope>
    <source>
        <strain>JA-2-3B'a(2-13)</strain>
    </source>
</reference>
<proteinExistence type="inferred from homology"/>
<accession>Q2JKZ9</accession>
<organism>
    <name type="scientific">Synechococcus sp. (strain JA-2-3B'a(2-13))</name>
    <name type="common">Cyanobacteria bacterium Yellowstone B-Prime</name>
    <dbReference type="NCBI Taxonomy" id="321332"/>
    <lineage>
        <taxon>Bacteria</taxon>
        <taxon>Bacillati</taxon>
        <taxon>Cyanobacteriota</taxon>
        <taxon>Cyanophyceae</taxon>
        <taxon>Synechococcales</taxon>
        <taxon>Synechococcaceae</taxon>
        <taxon>Synechococcus</taxon>
    </lineage>
</organism>
<evidence type="ECO:0000255" key="1">
    <source>
        <dbReference type="HAMAP-Rule" id="MF_00360"/>
    </source>
</evidence>
<evidence type="ECO:0000305" key="2"/>
<dbReference type="EMBL" id="CP000240">
    <property type="protein sequence ID" value="ABD02623.1"/>
    <property type="molecule type" value="Genomic_DNA"/>
</dbReference>
<dbReference type="RefSeq" id="WP_011433268.1">
    <property type="nucleotide sequence ID" value="NC_007776.1"/>
</dbReference>
<dbReference type="SMR" id="Q2JKZ9"/>
<dbReference type="STRING" id="321332.CYB_1664"/>
<dbReference type="KEGG" id="cyb:CYB_1664"/>
<dbReference type="eggNOG" id="COG0360">
    <property type="taxonomic scope" value="Bacteria"/>
</dbReference>
<dbReference type="HOGENOM" id="CLU_113441_5_2_3"/>
<dbReference type="OrthoDB" id="9812702at2"/>
<dbReference type="Proteomes" id="UP000001938">
    <property type="component" value="Chromosome"/>
</dbReference>
<dbReference type="GO" id="GO:0005737">
    <property type="term" value="C:cytoplasm"/>
    <property type="evidence" value="ECO:0007669"/>
    <property type="project" value="UniProtKB-ARBA"/>
</dbReference>
<dbReference type="GO" id="GO:1990904">
    <property type="term" value="C:ribonucleoprotein complex"/>
    <property type="evidence" value="ECO:0007669"/>
    <property type="project" value="UniProtKB-KW"/>
</dbReference>
<dbReference type="GO" id="GO:0005840">
    <property type="term" value="C:ribosome"/>
    <property type="evidence" value="ECO:0007669"/>
    <property type="project" value="UniProtKB-KW"/>
</dbReference>
<dbReference type="GO" id="GO:0070181">
    <property type="term" value="F:small ribosomal subunit rRNA binding"/>
    <property type="evidence" value="ECO:0007669"/>
    <property type="project" value="TreeGrafter"/>
</dbReference>
<dbReference type="GO" id="GO:0003735">
    <property type="term" value="F:structural constituent of ribosome"/>
    <property type="evidence" value="ECO:0007669"/>
    <property type="project" value="InterPro"/>
</dbReference>
<dbReference type="GO" id="GO:0006412">
    <property type="term" value="P:translation"/>
    <property type="evidence" value="ECO:0007669"/>
    <property type="project" value="UniProtKB-UniRule"/>
</dbReference>
<dbReference type="CDD" id="cd15487">
    <property type="entry name" value="bS6_chloro_cyano"/>
    <property type="match status" value="1"/>
</dbReference>
<dbReference type="Gene3D" id="3.30.70.60">
    <property type="match status" value="1"/>
</dbReference>
<dbReference type="HAMAP" id="MF_00360">
    <property type="entry name" value="Ribosomal_bS6"/>
    <property type="match status" value="1"/>
</dbReference>
<dbReference type="InterPro" id="IPR000529">
    <property type="entry name" value="Ribosomal_bS6"/>
</dbReference>
<dbReference type="InterPro" id="IPR035980">
    <property type="entry name" value="Ribosomal_bS6_sf"/>
</dbReference>
<dbReference type="InterPro" id="IPR020814">
    <property type="entry name" value="Ribosomal_S6_plastid/chlpt"/>
</dbReference>
<dbReference type="InterPro" id="IPR014717">
    <property type="entry name" value="Transl_elong_EF1B/ribsomal_bS6"/>
</dbReference>
<dbReference type="NCBIfam" id="TIGR00166">
    <property type="entry name" value="S6"/>
    <property type="match status" value="1"/>
</dbReference>
<dbReference type="PANTHER" id="PTHR21011">
    <property type="entry name" value="MITOCHONDRIAL 28S RIBOSOMAL PROTEIN S6"/>
    <property type="match status" value="1"/>
</dbReference>
<dbReference type="PANTHER" id="PTHR21011:SF1">
    <property type="entry name" value="SMALL RIBOSOMAL SUBUNIT PROTEIN BS6M"/>
    <property type="match status" value="1"/>
</dbReference>
<dbReference type="Pfam" id="PF01250">
    <property type="entry name" value="Ribosomal_S6"/>
    <property type="match status" value="1"/>
</dbReference>
<dbReference type="SUPFAM" id="SSF54995">
    <property type="entry name" value="Ribosomal protein S6"/>
    <property type="match status" value="1"/>
</dbReference>
<feature type="chain" id="PRO_1000059861" description="Small ribosomal subunit protein bS6">
    <location>
        <begin position="1"/>
        <end position="96"/>
    </location>
</feature>
<protein>
    <recommendedName>
        <fullName evidence="1">Small ribosomal subunit protein bS6</fullName>
    </recommendedName>
    <alternativeName>
        <fullName evidence="2">30S ribosomal protein S6</fullName>
    </alternativeName>
</protein>
<sequence>MPRAYETMLIVRPDLSDEPLEQLLSSQEAILRENGVTHVEITNRGKRRFAGFEMKKFKEGLYIQFNYEAEPNAVAAWEKNLRINESVLRHMTLRVG</sequence>
<name>RS6_SYNJB</name>
<gene>
    <name evidence="1" type="primary">rpsF</name>
    <name evidence="1" type="synonym">rps6</name>
    <name type="ordered locus">CYB_1664</name>
</gene>